<feature type="chain" id="PRO_0000154486" description="Anthranilate phosphoribosyltransferase">
    <location>
        <begin position="1"/>
        <end position="338"/>
    </location>
</feature>
<feature type="binding site" evidence="1">
    <location>
        <position position="78"/>
    </location>
    <ligand>
        <name>5-phospho-alpha-D-ribose 1-diphosphate</name>
        <dbReference type="ChEBI" id="CHEBI:58017"/>
    </ligand>
</feature>
<feature type="binding site" evidence="1">
    <location>
        <position position="78"/>
    </location>
    <ligand>
        <name>anthranilate</name>
        <dbReference type="ChEBI" id="CHEBI:16567"/>
        <label>1</label>
    </ligand>
</feature>
<feature type="binding site" evidence="1">
    <location>
        <begin position="81"/>
        <end position="82"/>
    </location>
    <ligand>
        <name>5-phospho-alpha-D-ribose 1-diphosphate</name>
        <dbReference type="ChEBI" id="CHEBI:58017"/>
    </ligand>
</feature>
<feature type="binding site" evidence="1">
    <location>
        <position position="86"/>
    </location>
    <ligand>
        <name>5-phospho-alpha-D-ribose 1-diphosphate</name>
        <dbReference type="ChEBI" id="CHEBI:58017"/>
    </ligand>
</feature>
<feature type="binding site" evidence="1">
    <location>
        <begin position="88"/>
        <end position="91"/>
    </location>
    <ligand>
        <name>5-phospho-alpha-D-ribose 1-diphosphate</name>
        <dbReference type="ChEBI" id="CHEBI:58017"/>
    </ligand>
</feature>
<feature type="binding site" evidence="1">
    <location>
        <position position="90"/>
    </location>
    <ligand>
        <name>Mg(2+)</name>
        <dbReference type="ChEBI" id="CHEBI:18420"/>
        <label>1</label>
    </ligand>
</feature>
<feature type="binding site" evidence="1">
    <location>
        <begin position="106"/>
        <end position="114"/>
    </location>
    <ligand>
        <name>5-phospho-alpha-D-ribose 1-diphosphate</name>
        <dbReference type="ChEBI" id="CHEBI:58017"/>
    </ligand>
</feature>
<feature type="binding site" evidence="1">
    <location>
        <position position="109"/>
    </location>
    <ligand>
        <name>anthranilate</name>
        <dbReference type="ChEBI" id="CHEBI:16567"/>
        <label>1</label>
    </ligand>
</feature>
<feature type="binding site" evidence="1">
    <location>
        <position position="118"/>
    </location>
    <ligand>
        <name>5-phospho-alpha-D-ribose 1-diphosphate</name>
        <dbReference type="ChEBI" id="CHEBI:58017"/>
    </ligand>
</feature>
<feature type="binding site" evidence="1">
    <location>
        <position position="163"/>
    </location>
    <ligand>
        <name>anthranilate</name>
        <dbReference type="ChEBI" id="CHEBI:16567"/>
        <label>2</label>
    </ligand>
</feature>
<feature type="binding site" evidence="1">
    <location>
        <position position="222"/>
    </location>
    <ligand>
        <name>Mg(2+)</name>
        <dbReference type="ChEBI" id="CHEBI:18420"/>
        <label>2</label>
    </ligand>
</feature>
<feature type="binding site" evidence="1">
    <location>
        <position position="223"/>
    </location>
    <ligand>
        <name>Mg(2+)</name>
        <dbReference type="ChEBI" id="CHEBI:18420"/>
        <label>1</label>
    </ligand>
</feature>
<feature type="binding site" evidence="1">
    <location>
        <position position="223"/>
    </location>
    <ligand>
        <name>Mg(2+)</name>
        <dbReference type="ChEBI" id="CHEBI:18420"/>
        <label>2</label>
    </ligand>
</feature>
<accession>Q4L676</accession>
<keyword id="KW-0028">Amino-acid biosynthesis</keyword>
<keyword id="KW-0057">Aromatic amino acid biosynthesis</keyword>
<keyword id="KW-0328">Glycosyltransferase</keyword>
<keyword id="KW-0460">Magnesium</keyword>
<keyword id="KW-0479">Metal-binding</keyword>
<keyword id="KW-0808">Transferase</keyword>
<keyword id="KW-0822">Tryptophan biosynthesis</keyword>
<protein>
    <recommendedName>
        <fullName evidence="1">Anthranilate phosphoribosyltransferase</fullName>
        <ecNumber evidence="1">2.4.2.18</ecNumber>
    </recommendedName>
</protein>
<organism>
    <name type="scientific">Staphylococcus haemolyticus (strain JCSC1435)</name>
    <dbReference type="NCBI Taxonomy" id="279808"/>
    <lineage>
        <taxon>Bacteria</taxon>
        <taxon>Bacillati</taxon>
        <taxon>Bacillota</taxon>
        <taxon>Bacilli</taxon>
        <taxon>Bacillales</taxon>
        <taxon>Staphylococcaceae</taxon>
        <taxon>Staphylococcus</taxon>
    </lineage>
</organism>
<reference key="1">
    <citation type="journal article" date="2005" name="J. Bacteriol.">
        <title>Whole-genome sequencing of Staphylococcus haemolyticus uncovers the extreme plasticity of its genome and the evolution of human-colonizing staphylococcal species.</title>
        <authorList>
            <person name="Takeuchi F."/>
            <person name="Watanabe S."/>
            <person name="Baba T."/>
            <person name="Yuzawa H."/>
            <person name="Ito T."/>
            <person name="Morimoto Y."/>
            <person name="Kuroda M."/>
            <person name="Cui L."/>
            <person name="Takahashi M."/>
            <person name="Ankai A."/>
            <person name="Baba S."/>
            <person name="Fukui S."/>
            <person name="Lee J.C."/>
            <person name="Hiramatsu K."/>
        </authorList>
    </citation>
    <scope>NUCLEOTIDE SEQUENCE [LARGE SCALE GENOMIC DNA]</scope>
    <source>
        <strain>JCSC1435</strain>
    </source>
</reference>
<evidence type="ECO:0000255" key="1">
    <source>
        <dbReference type="HAMAP-Rule" id="MF_00211"/>
    </source>
</evidence>
<comment type="function">
    <text evidence="1">Catalyzes the transfer of the phosphoribosyl group of 5-phosphorylribose-1-pyrophosphate (PRPP) to anthranilate to yield N-(5'-phosphoribosyl)-anthranilate (PRA).</text>
</comment>
<comment type="catalytic activity">
    <reaction evidence="1">
        <text>N-(5-phospho-beta-D-ribosyl)anthranilate + diphosphate = 5-phospho-alpha-D-ribose 1-diphosphate + anthranilate</text>
        <dbReference type="Rhea" id="RHEA:11768"/>
        <dbReference type="ChEBI" id="CHEBI:16567"/>
        <dbReference type="ChEBI" id="CHEBI:18277"/>
        <dbReference type="ChEBI" id="CHEBI:33019"/>
        <dbReference type="ChEBI" id="CHEBI:58017"/>
        <dbReference type="EC" id="2.4.2.18"/>
    </reaction>
</comment>
<comment type="cofactor">
    <cofactor evidence="1">
        <name>Mg(2+)</name>
        <dbReference type="ChEBI" id="CHEBI:18420"/>
    </cofactor>
    <text evidence="1">Binds 2 magnesium ions per monomer.</text>
</comment>
<comment type="pathway">
    <text evidence="1">Amino-acid biosynthesis; L-tryptophan biosynthesis; L-tryptophan from chorismate: step 2/5.</text>
</comment>
<comment type="subunit">
    <text evidence="1">Homodimer.</text>
</comment>
<comment type="similarity">
    <text evidence="1">Belongs to the anthranilate phosphoribosyltransferase family.</text>
</comment>
<gene>
    <name evidence="1" type="primary">trpD</name>
    <name type="ordered locus">SH1540</name>
</gene>
<sequence length="338" mass="37366">MRLLKQLDNNITLTQSETTQFITYLTNPEINVEDKVDLLTQFTKKEIKQQELTYVVNSLIQTMYPNQPTYEGSICVCGTGGDKSNSFNISTTVSFIVASAGIPVIKHGNRSITSHSGSTDLLNELGIKTTKVSEVPLQIEEQGLAFISAMESYPIMKYIQPVRKMISTPTIFNIVGPLINPFKLTYQVLGVYDPSRLYMIAQTLKDLGRRRAIVLHGANGMDEATLSGNNEVYELNENGDITHYFINAKDYGLKVASNQDLQGGSPKENKMITLDILSGDDKTCRRDVVVLNAALALYVSEKVDTIASGISLATILIDSGRAMVQFMKMRGDICDDIK</sequence>
<proteinExistence type="inferred from homology"/>
<dbReference type="EC" id="2.4.2.18" evidence="1"/>
<dbReference type="EMBL" id="AP006716">
    <property type="protein sequence ID" value="BAE04849.1"/>
    <property type="molecule type" value="Genomic_DNA"/>
</dbReference>
<dbReference type="RefSeq" id="WP_011275831.1">
    <property type="nucleotide sequence ID" value="NC_007168.1"/>
</dbReference>
<dbReference type="SMR" id="Q4L676"/>
<dbReference type="GeneID" id="93780927"/>
<dbReference type="KEGG" id="sha:SH1540"/>
<dbReference type="eggNOG" id="COG0547">
    <property type="taxonomic scope" value="Bacteria"/>
</dbReference>
<dbReference type="HOGENOM" id="CLU_034315_3_0_9"/>
<dbReference type="OrthoDB" id="9806430at2"/>
<dbReference type="UniPathway" id="UPA00035">
    <property type="reaction ID" value="UER00041"/>
</dbReference>
<dbReference type="Proteomes" id="UP000000543">
    <property type="component" value="Chromosome"/>
</dbReference>
<dbReference type="GO" id="GO:0005829">
    <property type="term" value="C:cytosol"/>
    <property type="evidence" value="ECO:0007669"/>
    <property type="project" value="TreeGrafter"/>
</dbReference>
<dbReference type="GO" id="GO:0004048">
    <property type="term" value="F:anthranilate phosphoribosyltransferase activity"/>
    <property type="evidence" value="ECO:0007669"/>
    <property type="project" value="UniProtKB-UniRule"/>
</dbReference>
<dbReference type="GO" id="GO:0000287">
    <property type="term" value="F:magnesium ion binding"/>
    <property type="evidence" value="ECO:0007669"/>
    <property type="project" value="UniProtKB-UniRule"/>
</dbReference>
<dbReference type="GO" id="GO:0000162">
    <property type="term" value="P:L-tryptophan biosynthetic process"/>
    <property type="evidence" value="ECO:0007669"/>
    <property type="project" value="UniProtKB-UniRule"/>
</dbReference>
<dbReference type="Gene3D" id="3.40.1030.10">
    <property type="entry name" value="Nucleoside phosphorylase/phosphoribosyltransferase catalytic domain"/>
    <property type="match status" value="1"/>
</dbReference>
<dbReference type="Gene3D" id="1.20.970.10">
    <property type="entry name" value="Transferase, Pyrimidine Nucleoside Phosphorylase, Chain C"/>
    <property type="match status" value="1"/>
</dbReference>
<dbReference type="HAMAP" id="MF_00211">
    <property type="entry name" value="TrpD"/>
    <property type="match status" value="1"/>
</dbReference>
<dbReference type="InterPro" id="IPR005940">
    <property type="entry name" value="Anthranilate_Pribosyl_Tfrase"/>
</dbReference>
<dbReference type="InterPro" id="IPR000312">
    <property type="entry name" value="Glycosyl_Trfase_fam3"/>
</dbReference>
<dbReference type="InterPro" id="IPR035902">
    <property type="entry name" value="Nuc_phospho_transferase"/>
</dbReference>
<dbReference type="NCBIfam" id="TIGR01245">
    <property type="entry name" value="trpD"/>
    <property type="match status" value="1"/>
</dbReference>
<dbReference type="PANTHER" id="PTHR43285">
    <property type="entry name" value="ANTHRANILATE PHOSPHORIBOSYLTRANSFERASE"/>
    <property type="match status" value="1"/>
</dbReference>
<dbReference type="PANTHER" id="PTHR43285:SF2">
    <property type="entry name" value="ANTHRANILATE PHOSPHORIBOSYLTRANSFERASE"/>
    <property type="match status" value="1"/>
</dbReference>
<dbReference type="Pfam" id="PF00591">
    <property type="entry name" value="Glycos_transf_3"/>
    <property type="match status" value="1"/>
</dbReference>
<dbReference type="SUPFAM" id="SSF52418">
    <property type="entry name" value="Nucleoside phosphorylase/phosphoribosyltransferase catalytic domain"/>
    <property type="match status" value="1"/>
</dbReference>
<name>TRPD_STAHJ</name>